<dbReference type="EC" id="1.11.1.24" evidence="1"/>
<dbReference type="EMBL" id="J04985">
    <property type="protein sequence ID" value="AAA34358.1"/>
    <property type="molecule type" value="Genomic_DNA"/>
</dbReference>
<dbReference type="PIR" id="B32646">
    <property type="entry name" value="B32646"/>
</dbReference>
<dbReference type="SMR" id="P14293"/>
<dbReference type="Allergome" id="178">
    <property type="allergen name" value="Cand b 2"/>
</dbReference>
<dbReference type="Allergome" id="3175">
    <property type="allergen name" value="Cand b 2.0101"/>
</dbReference>
<dbReference type="GO" id="GO:0005739">
    <property type="term" value="C:mitochondrion"/>
    <property type="evidence" value="ECO:0007669"/>
    <property type="project" value="TreeGrafter"/>
</dbReference>
<dbReference type="GO" id="GO:0005778">
    <property type="term" value="C:peroxisomal membrane"/>
    <property type="evidence" value="ECO:0007669"/>
    <property type="project" value="UniProtKB-SubCell"/>
</dbReference>
<dbReference type="GO" id="GO:0008379">
    <property type="term" value="F:thioredoxin peroxidase activity"/>
    <property type="evidence" value="ECO:0007669"/>
    <property type="project" value="InterPro"/>
</dbReference>
<dbReference type="GO" id="GO:0045454">
    <property type="term" value="P:cell redox homeostasis"/>
    <property type="evidence" value="ECO:0007669"/>
    <property type="project" value="TreeGrafter"/>
</dbReference>
<dbReference type="GO" id="GO:0034599">
    <property type="term" value="P:cellular response to oxidative stress"/>
    <property type="evidence" value="ECO:0007669"/>
    <property type="project" value="InterPro"/>
</dbReference>
<dbReference type="GO" id="GO:0042744">
    <property type="term" value="P:hydrogen peroxide catabolic process"/>
    <property type="evidence" value="ECO:0007669"/>
    <property type="project" value="TreeGrafter"/>
</dbReference>
<dbReference type="GO" id="GO:0015945">
    <property type="term" value="P:methanol metabolic process"/>
    <property type="evidence" value="ECO:0007669"/>
    <property type="project" value="UniProtKB-KW"/>
</dbReference>
<dbReference type="CDD" id="cd03013">
    <property type="entry name" value="PRX5_like"/>
    <property type="match status" value="1"/>
</dbReference>
<dbReference type="Gene3D" id="3.40.30.10">
    <property type="entry name" value="Glutaredoxin"/>
    <property type="match status" value="1"/>
</dbReference>
<dbReference type="InterPro" id="IPR037944">
    <property type="entry name" value="PRX5-like"/>
</dbReference>
<dbReference type="InterPro" id="IPR013740">
    <property type="entry name" value="Redoxin"/>
</dbReference>
<dbReference type="InterPro" id="IPR036249">
    <property type="entry name" value="Thioredoxin-like_sf"/>
</dbReference>
<dbReference type="InterPro" id="IPR013766">
    <property type="entry name" value="Thioredoxin_domain"/>
</dbReference>
<dbReference type="PANTHER" id="PTHR10430">
    <property type="entry name" value="PEROXIREDOXIN"/>
    <property type="match status" value="1"/>
</dbReference>
<dbReference type="PANTHER" id="PTHR10430:SF16">
    <property type="entry name" value="PEROXIREDOXIN-5, MITOCHONDRIAL"/>
    <property type="match status" value="1"/>
</dbReference>
<dbReference type="Pfam" id="PF08534">
    <property type="entry name" value="Redoxin"/>
    <property type="match status" value="1"/>
</dbReference>
<dbReference type="SUPFAM" id="SSF52833">
    <property type="entry name" value="Thioredoxin-like"/>
    <property type="match status" value="1"/>
</dbReference>
<dbReference type="PROSITE" id="PS51352">
    <property type="entry name" value="THIOREDOXIN_2"/>
    <property type="match status" value="1"/>
</dbReference>
<protein>
    <recommendedName>
        <fullName>Putative peroxiredoxin-B</fullName>
        <ecNumber evidence="1">1.11.1.24</ecNumber>
    </recommendedName>
    <alternativeName>
        <fullName>PMP20</fullName>
    </alternativeName>
    <alternativeName>
        <fullName>Peroxisomal membrane protein B</fullName>
    </alternativeName>
    <alternativeName>
        <fullName>Thioredoxin reductase</fullName>
    </alternativeName>
    <alternativeName>
        <fullName evidence="5">Thioredoxin-dependent peroxiredoxin-B</fullName>
    </alternativeName>
    <allergenName>Cand b 2</allergenName>
</protein>
<comment type="function">
    <text evidence="1">Thiol-specific peroxidase that catalyzes the reduction of hydrogen peroxide and organic hydroperoxides to water and alcohols, respectively. Plays a role in cell protection against oxidative stress by detoxifying peroxides and as sensor of hydrogen peroxide-mediated signaling events.</text>
</comment>
<comment type="catalytic activity">
    <reaction evidence="1">
        <text>a hydroperoxide + [thioredoxin]-dithiol = an alcohol + [thioredoxin]-disulfide + H2O</text>
        <dbReference type="Rhea" id="RHEA:62620"/>
        <dbReference type="Rhea" id="RHEA-COMP:10698"/>
        <dbReference type="Rhea" id="RHEA-COMP:10700"/>
        <dbReference type="ChEBI" id="CHEBI:15377"/>
        <dbReference type="ChEBI" id="CHEBI:29950"/>
        <dbReference type="ChEBI" id="CHEBI:30879"/>
        <dbReference type="ChEBI" id="CHEBI:35924"/>
        <dbReference type="ChEBI" id="CHEBI:50058"/>
        <dbReference type="EC" id="1.11.1.24"/>
    </reaction>
</comment>
<comment type="subcellular location">
    <subcellularLocation>
        <location>Peroxisome membrane</location>
        <topology evidence="3">Peripheral membrane protein</topology>
    </subcellularLocation>
</comment>
<comment type="induction">
    <text evidence="3">By methanol.</text>
</comment>
<comment type="allergen">
    <text evidence="4">Causes an allergic reaction in human. Shares common IgE-binding epitopes with allergen Asp f 3 of Aspergillus fumigatus.</text>
</comment>
<comment type="miscellaneous">
    <text evidence="5">The active site is a conserved redox-active cysteine residue, the peroxidatic cysteine (C(P)), which makes the nucleophilic attack on the peroxide substrate. The peroxide oxidizes the C(P)-SH to cysteine sulfenic acid (C(P)-SOH), which then reacts with another cysteine residue, the resolving cysteine (C(R)), to form a disulfide bridge. The disulfide is subsequently reduced by an appropriate electron donor to complete the catalytic cycle. In this 1-Cys peroxiredoxin, no C(R) is present and C(P) instead forms a disulfide with a cysteine from another protein or with a small thiol molecule.</text>
</comment>
<comment type="similarity">
    <text evidence="5">Belongs to the peroxiredoxin family. Prx5 subfamily.</text>
</comment>
<accession>P14293</accession>
<gene>
    <name type="primary">PMPB</name>
</gene>
<sequence length="167" mass="18056">MAPIKRGDRFPTTDDVYYIPPEGGEPGAFELSKFVKTKKFVVVSVPGAFTPPCTEQHLPGYIKNLPRILSKGVDFVLVITQNDPFVLKGWKKELGAADAKKLIFVSDPNLKLTKKLGSTIDLSSIGLGTRSGRLALIVNRSGIVEYAAIENGGEVDVSTAQKIIAKL</sequence>
<name>PMPB_CANBO</name>
<evidence type="ECO:0000250" key="1">
    <source>
        <dbReference type="UniProtKB" id="P38013"/>
    </source>
</evidence>
<evidence type="ECO:0000255" key="2">
    <source>
        <dbReference type="PROSITE-ProRule" id="PRU00691"/>
    </source>
</evidence>
<evidence type="ECO:0000269" key="3">
    <source>
    </source>
</evidence>
<evidence type="ECO:0000269" key="4">
    <source>
    </source>
</evidence>
<evidence type="ECO:0000305" key="5"/>
<reference key="1">
    <citation type="journal article" date="1989" name="J. Biol. Chem.">
        <title>Two genes encode the major membrane-associated protein of methanol-induced peroxisomes from Candida boidinii.</title>
        <authorList>
            <person name="Garrard L.J."/>
            <person name="Goodman J.M."/>
        </authorList>
    </citation>
    <scope>NUCLEOTIDE SEQUENCE [GENOMIC DNA]</scope>
    <scope>PROTEIN SEQUENCE OF 2-26</scope>
    <scope>SUBCELLULAR LOCATION</scope>
    <scope>INDUCTION</scope>
    <source>
        <strain>ATCC 32195</strain>
    </source>
</reference>
<reference key="2">
    <citation type="journal article" date="1997" name="Am. J. Respir. Crit. Care Med.">
        <title>Allergens of Aspergillus fumigatus and Candida boidinii share IgE-binding epitopes.</title>
        <authorList>
            <person name="Hemmann S."/>
            <person name="Blaser K."/>
            <person name="Crameri R."/>
        </authorList>
    </citation>
    <scope>CROSS-REACTIVITY WITH ASP F 3</scope>
</reference>
<keyword id="KW-0020">Allergen</keyword>
<keyword id="KW-0049">Antioxidant</keyword>
<keyword id="KW-0903">Direct protein sequencing</keyword>
<keyword id="KW-0472">Membrane</keyword>
<keyword id="KW-0485">Methanol utilization</keyword>
<keyword id="KW-0560">Oxidoreductase</keyword>
<keyword id="KW-0575">Peroxidase</keyword>
<keyword id="KW-0576">Peroxisome</keyword>
<keyword id="KW-0676">Redox-active center</keyword>
<feature type="initiator methionine" description="Removed" evidence="3">
    <location>
        <position position="1"/>
    </location>
</feature>
<feature type="chain" id="PRO_0000056605" description="Putative peroxiredoxin-B">
    <location>
        <begin position="2"/>
        <end position="167"/>
    </location>
</feature>
<feature type="domain" description="Thioredoxin" evidence="2">
    <location>
        <begin position="4"/>
        <end position="167"/>
    </location>
</feature>
<feature type="short sequence motif" description="Microbody targeting signal">
    <location>
        <begin position="165"/>
        <end position="167"/>
    </location>
</feature>
<feature type="active site" description="Cysteine sulfenic acid (-SOH) intermediate" evidence="1">
    <location>
        <position position="53"/>
    </location>
</feature>
<proteinExistence type="evidence at protein level"/>
<organism>
    <name type="scientific">Candida boidinii</name>
    <name type="common">Yeast</name>
    <dbReference type="NCBI Taxonomy" id="5477"/>
    <lineage>
        <taxon>Eukaryota</taxon>
        <taxon>Fungi</taxon>
        <taxon>Dikarya</taxon>
        <taxon>Ascomycota</taxon>
        <taxon>Saccharomycotina</taxon>
        <taxon>Pichiomycetes</taxon>
        <taxon>Pichiales</taxon>
        <taxon>Pichiaceae</taxon>
        <taxon>Ogataea</taxon>
        <taxon>Ogataea/Candida clade</taxon>
    </lineage>
</organism>